<gene>
    <name evidence="1" type="primary">rimK1</name>
    <name type="ordered locus">Sbal_0505</name>
</gene>
<comment type="cofactor">
    <cofactor evidence="1">
        <name>Mg(2+)</name>
        <dbReference type="ChEBI" id="CHEBI:18420"/>
    </cofactor>
    <cofactor evidence="1">
        <name>Mn(2+)</name>
        <dbReference type="ChEBI" id="CHEBI:29035"/>
    </cofactor>
    <text evidence="1">Binds 2 magnesium or manganese ions per subunit.</text>
</comment>
<comment type="similarity">
    <text evidence="1">Belongs to the RimK family.</text>
</comment>
<keyword id="KW-0067">ATP-binding</keyword>
<keyword id="KW-0436">Ligase</keyword>
<keyword id="KW-0460">Magnesium</keyword>
<keyword id="KW-0464">Manganese</keyword>
<keyword id="KW-0479">Metal-binding</keyword>
<keyword id="KW-0547">Nucleotide-binding</keyword>
<keyword id="KW-0648">Protein biosynthesis</keyword>
<keyword id="KW-1185">Reference proteome</keyword>
<organism>
    <name type="scientific">Shewanella baltica (strain OS155 / ATCC BAA-1091)</name>
    <dbReference type="NCBI Taxonomy" id="325240"/>
    <lineage>
        <taxon>Bacteria</taxon>
        <taxon>Pseudomonadati</taxon>
        <taxon>Pseudomonadota</taxon>
        <taxon>Gammaproteobacteria</taxon>
        <taxon>Alteromonadales</taxon>
        <taxon>Shewanellaceae</taxon>
        <taxon>Shewanella</taxon>
    </lineage>
</organism>
<proteinExistence type="inferred from homology"/>
<feature type="chain" id="PRO_0000340548" description="Probable alpha-L-glutamate ligase 1">
    <location>
        <begin position="1"/>
        <end position="301"/>
    </location>
</feature>
<feature type="domain" description="ATP-grasp" evidence="1">
    <location>
        <begin position="104"/>
        <end position="287"/>
    </location>
</feature>
<feature type="binding site" evidence="1">
    <location>
        <position position="141"/>
    </location>
    <ligand>
        <name>ATP</name>
        <dbReference type="ChEBI" id="CHEBI:30616"/>
    </ligand>
</feature>
<feature type="binding site" evidence="1">
    <location>
        <begin position="178"/>
        <end position="179"/>
    </location>
    <ligand>
        <name>ATP</name>
        <dbReference type="ChEBI" id="CHEBI:30616"/>
    </ligand>
</feature>
<feature type="binding site" evidence="1">
    <location>
        <position position="187"/>
    </location>
    <ligand>
        <name>ATP</name>
        <dbReference type="ChEBI" id="CHEBI:30616"/>
    </ligand>
</feature>
<feature type="binding site" evidence="1">
    <location>
        <begin position="211"/>
        <end position="213"/>
    </location>
    <ligand>
        <name>ATP</name>
        <dbReference type="ChEBI" id="CHEBI:30616"/>
    </ligand>
</feature>
<feature type="binding site" evidence="1">
    <location>
        <position position="248"/>
    </location>
    <ligand>
        <name>Mg(2+)</name>
        <dbReference type="ChEBI" id="CHEBI:18420"/>
        <label>1</label>
    </ligand>
</feature>
<feature type="binding site" evidence="1">
    <location>
        <position position="248"/>
    </location>
    <ligand>
        <name>Mn(2+)</name>
        <dbReference type="ChEBI" id="CHEBI:29035"/>
        <label>1</label>
    </ligand>
</feature>
<feature type="binding site" evidence="1">
    <location>
        <position position="260"/>
    </location>
    <ligand>
        <name>Mg(2+)</name>
        <dbReference type="ChEBI" id="CHEBI:18420"/>
        <label>1</label>
    </ligand>
</feature>
<feature type="binding site" evidence="1">
    <location>
        <position position="260"/>
    </location>
    <ligand>
        <name>Mg(2+)</name>
        <dbReference type="ChEBI" id="CHEBI:18420"/>
        <label>2</label>
    </ligand>
</feature>
<feature type="binding site" evidence="1">
    <location>
        <position position="260"/>
    </location>
    <ligand>
        <name>Mn(2+)</name>
        <dbReference type="ChEBI" id="CHEBI:29035"/>
        <label>1</label>
    </ligand>
</feature>
<feature type="binding site" evidence="1">
    <location>
        <position position="260"/>
    </location>
    <ligand>
        <name>Mn(2+)</name>
        <dbReference type="ChEBI" id="CHEBI:29035"/>
        <label>2</label>
    </ligand>
</feature>
<feature type="binding site" evidence="1">
    <location>
        <position position="262"/>
    </location>
    <ligand>
        <name>Mg(2+)</name>
        <dbReference type="ChEBI" id="CHEBI:18420"/>
        <label>2</label>
    </ligand>
</feature>
<feature type="binding site" evidence="1">
    <location>
        <position position="262"/>
    </location>
    <ligand>
        <name>Mn(2+)</name>
        <dbReference type="ChEBI" id="CHEBI:29035"/>
        <label>2</label>
    </ligand>
</feature>
<evidence type="ECO:0000255" key="1">
    <source>
        <dbReference type="HAMAP-Rule" id="MF_01552"/>
    </source>
</evidence>
<sequence>MKIGILSQFPQLYSTQRLVEACQSRGHEAVVINTLNCYMNINSIKPSIHYEGTELVGFDAIIPRIHASVTFYGCAVVRQFEMMGVYAANDSISIARSRDKLRALQLLSRKGIGMPVTGFANKPNDIPDLINMVGGAPLVIKLLEGTQGIGVVLAETKTAAESVIEAFLGLKANILVQEYIKESNGSDIRCFVVGDKVIASMKRQGPEGDFRSNLHLGGCGEVVKITAVERKMAIAAVKAMGLVVAGVDILRSNRGPLILEVNSAPGIEGIEQTTGISVTEPIVEYIEKMVAARKTNRPIIA</sequence>
<protein>
    <recommendedName>
        <fullName evidence="1">Probable alpha-L-glutamate ligase 1</fullName>
        <ecNumber evidence="1">6.3.2.-</ecNumber>
    </recommendedName>
</protein>
<name>RIMK1_SHEB5</name>
<accession>A3CZX1</accession>
<reference key="1">
    <citation type="submission" date="2007-02" db="EMBL/GenBank/DDBJ databases">
        <title>Complete sequence of chromosome of Shewanella baltica OS155.</title>
        <authorList>
            <consortium name="US DOE Joint Genome Institute"/>
            <person name="Copeland A."/>
            <person name="Lucas S."/>
            <person name="Lapidus A."/>
            <person name="Barry K."/>
            <person name="Detter J.C."/>
            <person name="Glavina del Rio T."/>
            <person name="Hammon N."/>
            <person name="Israni S."/>
            <person name="Dalin E."/>
            <person name="Tice H."/>
            <person name="Pitluck S."/>
            <person name="Sims D.R."/>
            <person name="Brettin T."/>
            <person name="Bruce D."/>
            <person name="Han C."/>
            <person name="Tapia R."/>
            <person name="Brainard J."/>
            <person name="Schmutz J."/>
            <person name="Larimer F."/>
            <person name="Land M."/>
            <person name="Hauser L."/>
            <person name="Kyrpides N."/>
            <person name="Mikhailova N."/>
            <person name="Brettar I."/>
            <person name="Klappenbach J."/>
            <person name="Konstantinidis K."/>
            <person name="Rodrigues J."/>
            <person name="Tiedje J."/>
            <person name="Richardson P."/>
        </authorList>
    </citation>
    <scope>NUCLEOTIDE SEQUENCE [LARGE SCALE GENOMIC DNA]</scope>
    <source>
        <strain>OS155 / ATCC BAA-1091</strain>
    </source>
</reference>
<dbReference type="EC" id="6.3.2.-" evidence="1"/>
<dbReference type="EMBL" id="CP000563">
    <property type="protein sequence ID" value="ABN60034.1"/>
    <property type="molecule type" value="Genomic_DNA"/>
</dbReference>
<dbReference type="SMR" id="A3CZX1"/>
<dbReference type="STRING" id="325240.Sbal_0505"/>
<dbReference type="KEGG" id="sbl:Sbal_0505"/>
<dbReference type="HOGENOM" id="CLU_054353_0_1_6"/>
<dbReference type="OrthoDB" id="3865600at2"/>
<dbReference type="Proteomes" id="UP000001557">
    <property type="component" value="Chromosome"/>
</dbReference>
<dbReference type="GO" id="GO:0005737">
    <property type="term" value="C:cytoplasm"/>
    <property type="evidence" value="ECO:0007669"/>
    <property type="project" value="TreeGrafter"/>
</dbReference>
<dbReference type="GO" id="GO:0005524">
    <property type="term" value="F:ATP binding"/>
    <property type="evidence" value="ECO:0007669"/>
    <property type="project" value="UniProtKB-UniRule"/>
</dbReference>
<dbReference type="GO" id="GO:0046872">
    <property type="term" value="F:metal ion binding"/>
    <property type="evidence" value="ECO:0007669"/>
    <property type="project" value="UniProtKB-KW"/>
</dbReference>
<dbReference type="GO" id="GO:0018169">
    <property type="term" value="F:ribosomal S6-glutamic acid ligase activity"/>
    <property type="evidence" value="ECO:0007669"/>
    <property type="project" value="TreeGrafter"/>
</dbReference>
<dbReference type="GO" id="GO:0036211">
    <property type="term" value="P:protein modification process"/>
    <property type="evidence" value="ECO:0007669"/>
    <property type="project" value="InterPro"/>
</dbReference>
<dbReference type="GO" id="GO:0009432">
    <property type="term" value="P:SOS response"/>
    <property type="evidence" value="ECO:0007669"/>
    <property type="project" value="TreeGrafter"/>
</dbReference>
<dbReference type="GO" id="GO:0006412">
    <property type="term" value="P:translation"/>
    <property type="evidence" value="ECO:0007669"/>
    <property type="project" value="UniProtKB-KW"/>
</dbReference>
<dbReference type="FunFam" id="3.40.50.20:FF:000004">
    <property type="entry name" value="Probable alpha-L-glutamate ligase"/>
    <property type="match status" value="1"/>
</dbReference>
<dbReference type="FunFam" id="3.30.1490.20:FF:000005">
    <property type="entry name" value="Probable alpha-L-glutamate ligase 1"/>
    <property type="match status" value="1"/>
</dbReference>
<dbReference type="Gene3D" id="3.40.50.20">
    <property type="match status" value="1"/>
</dbReference>
<dbReference type="Gene3D" id="3.30.1490.20">
    <property type="entry name" value="ATP-grasp fold, A domain"/>
    <property type="match status" value="1"/>
</dbReference>
<dbReference type="Gene3D" id="3.30.470.20">
    <property type="entry name" value="ATP-grasp fold, B domain"/>
    <property type="match status" value="1"/>
</dbReference>
<dbReference type="HAMAP" id="MF_01552">
    <property type="entry name" value="RimK"/>
    <property type="match status" value="1"/>
</dbReference>
<dbReference type="InterPro" id="IPR011761">
    <property type="entry name" value="ATP-grasp"/>
</dbReference>
<dbReference type="InterPro" id="IPR013651">
    <property type="entry name" value="ATP-grasp_RimK-type"/>
</dbReference>
<dbReference type="InterPro" id="IPR013815">
    <property type="entry name" value="ATP_grasp_subdomain_1"/>
</dbReference>
<dbReference type="InterPro" id="IPR023533">
    <property type="entry name" value="RimK"/>
</dbReference>
<dbReference type="InterPro" id="IPR041107">
    <property type="entry name" value="Rimk_N"/>
</dbReference>
<dbReference type="InterPro" id="IPR004666">
    <property type="entry name" value="Rp_bS6_RimK/Lys_biosynth_LsyX"/>
</dbReference>
<dbReference type="NCBIfam" id="NF007764">
    <property type="entry name" value="PRK10446.1"/>
    <property type="match status" value="1"/>
</dbReference>
<dbReference type="NCBIfam" id="TIGR00768">
    <property type="entry name" value="rimK_fam"/>
    <property type="match status" value="1"/>
</dbReference>
<dbReference type="PANTHER" id="PTHR21621:SF7">
    <property type="entry name" value="RIBOSOMAL PROTEIN BS6--L-GLUTAMATE LIGASE"/>
    <property type="match status" value="1"/>
</dbReference>
<dbReference type="PANTHER" id="PTHR21621">
    <property type="entry name" value="RIBOSOMAL PROTEIN S6 MODIFICATION PROTEIN"/>
    <property type="match status" value="1"/>
</dbReference>
<dbReference type="Pfam" id="PF08443">
    <property type="entry name" value="RimK"/>
    <property type="match status" value="1"/>
</dbReference>
<dbReference type="Pfam" id="PF18030">
    <property type="entry name" value="Rimk_N"/>
    <property type="match status" value="1"/>
</dbReference>
<dbReference type="SUPFAM" id="SSF56059">
    <property type="entry name" value="Glutathione synthetase ATP-binding domain-like"/>
    <property type="match status" value="1"/>
</dbReference>
<dbReference type="PROSITE" id="PS50975">
    <property type="entry name" value="ATP_GRASP"/>
    <property type="match status" value="1"/>
</dbReference>